<evidence type="ECO:0000250" key="1"/>
<evidence type="ECO:0000255" key="2"/>
<evidence type="ECO:0000255" key="3">
    <source>
        <dbReference type="PROSITE-ProRule" id="PRU00368"/>
    </source>
</evidence>
<evidence type="ECO:0000256" key="4">
    <source>
        <dbReference type="SAM" id="MobiDB-lite"/>
    </source>
</evidence>
<sequence>MADLRILVSIILMTNAVLEKGGCTGPPGPPGHPGPPGIRGPPGIRGIPGLPGPPGTPGPSVKCPCHRQSAFTVKLSGQLPSPSKPVPFTEVLYNAQRDLQEDTGVFTCRVPGNYHFLFDVDLHHCKVTVQLMRDKSSVLEKHQVSTKEPRSLSGMLTLPLHVGEKVWLEAKVETEKPEQARVTIYFSGFLT</sequence>
<accession>Q2KIT0</accession>
<keyword id="KW-0176">Collagen</keyword>
<keyword id="KW-1185">Reference proteome</keyword>
<keyword id="KW-0964">Secreted</keyword>
<keyword id="KW-0732">Signal</keyword>
<dbReference type="EMBL" id="FJ645734">
    <property type="protein sequence ID" value="ACV32358.1"/>
    <property type="molecule type" value="mRNA"/>
</dbReference>
<dbReference type="EMBL" id="BC112522">
    <property type="protein sequence ID" value="AAI12523.1"/>
    <property type="molecule type" value="mRNA"/>
</dbReference>
<dbReference type="RefSeq" id="NP_001040049.1">
    <property type="nucleotide sequence ID" value="NM_001046584.2"/>
</dbReference>
<dbReference type="SMR" id="Q2KIT0"/>
<dbReference type="FunCoup" id="Q2KIT0">
    <property type="interactions" value="2"/>
</dbReference>
<dbReference type="STRING" id="9913.ENSBTAP00000037834"/>
<dbReference type="PaxDb" id="9913-ENSBTAP00000037834"/>
<dbReference type="PeptideAtlas" id="Q2KIT0"/>
<dbReference type="GeneID" id="616715"/>
<dbReference type="KEGG" id="bta:616715"/>
<dbReference type="VEuPathDB" id="HostDB:ENSBTAG00000026666"/>
<dbReference type="eggNOG" id="ENOG502SK5K">
    <property type="taxonomic scope" value="Eukaryota"/>
</dbReference>
<dbReference type="HOGENOM" id="CLU_001074_0_2_1"/>
<dbReference type="InParanoid" id="Q2KIT0"/>
<dbReference type="OMA" id="DVELQHC"/>
<dbReference type="OrthoDB" id="6343173at2759"/>
<dbReference type="TreeFam" id="TF329591"/>
<dbReference type="Proteomes" id="UP000009136">
    <property type="component" value="Chromosome 5"/>
</dbReference>
<dbReference type="Bgee" id="ENSBTAG00000026666">
    <property type="expression patterns" value="Expressed in liver and 48 other cell types or tissues"/>
</dbReference>
<dbReference type="GO" id="GO:0005581">
    <property type="term" value="C:collagen trimer"/>
    <property type="evidence" value="ECO:0007669"/>
    <property type="project" value="UniProtKB-KW"/>
</dbReference>
<dbReference type="GO" id="GO:0005576">
    <property type="term" value="C:extracellular region"/>
    <property type="evidence" value="ECO:0007669"/>
    <property type="project" value="UniProtKB-SubCell"/>
</dbReference>
<dbReference type="Gene3D" id="2.60.120.40">
    <property type="match status" value="1"/>
</dbReference>
<dbReference type="InterPro" id="IPR001073">
    <property type="entry name" value="C1q_dom"/>
</dbReference>
<dbReference type="InterPro" id="IPR050392">
    <property type="entry name" value="Collagen/C1q_domain"/>
</dbReference>
<dbReference type="InterPro" id="IPR008983">
    <property type="entry name" value="Tumour_necrosis_fac-like_dom"/>
</dbReference>
<dbReference type="PANTHER" id="PTHR15427">
    <property type="entry name" value="EMILIN ELASTIN MICROFIBRIL INTERFACE-LOCATED PROTEIN ELASTIN MICROFIBRIL INTERFACER"/>
    <property type="match status" value="1"/>
</dbReference>
<dbReference type="PANTHER" id="PTHR15427:SF32">
    <property type="entry name" value="PROTEIN HP-20 HOMOLOG"/>
    <property type="match status" value="1"/>
</dbReference>
<dbReference type="Pfam" id="PF00386">
    <property type="entry name" value="C1q"/>
    <property type="match status" value="1"/>
</dbReference>
<dbReference type="PRINTS" id="PR00007">
    <property type="entry name" value="COMPLEMNTC1Q"/>
</dbReference>
<dbReference type="SMART" id="SM00110">
    <property type="entry name" value="C1Q"/>
    <property type="match status" value="1"/>
</dbReference>
<dbReference type="SUPFAM" id="SSF49842">
    <property type="entry name" value="TNF-like"/>
    <property type="match status" value="1"/>
</dbReference>
<dbReference type="PROSITE" id="PS50871">
    <property type="entry name" value="C1Q"/>
    <property type="match status" value="1"/>
</dbReference>
<reference key="1">
    <citation type="submission" date="2009-01" db="EMBL/GenBank/DDBJ databases">
        <title>Identification and characterization of three novel C1q/TNF family members that are orthologs of the siberian chipmunk hibernating proteins HP-20, HP-25, and HP-27.</title>
        <authorList>
            <person name="Wong G.W."/>
        </authorList>
    </citation>
    <scope>NUCLEOTIDE SEQUENCE [MRNA]</scope>
    <source>
        <tissue>Liver</tissue>
    </source>
</reference>
<reference key="2">
    <citation type="submission" date="2006-01" db="EMBL/GenBank/DDBJ databases">
        <authorList>
            <consortium name="NIH - Mammalian Gene Collection (MGC) project"/>
        </authorList>
    </citation>
    <scope>NUCLEOTIDE SEQUENCE [LARGE SCALE MRNA]</scope>
    <source>
        <strain>Hereford</strain>
        <tissue>Testis</tissue>
    </source>
</reference>
<feature type="signal peptide" evidence="2">
    <location>
        <begin position="1"/>
        <end position="16"/>
    </location>
</feature>
<feature type="chain" id="PRO_0000399904" description="Protein HP-20 homolog">
    <location>
        <begin position="17"/>
        <end position="191"/>
    </location>
</feature>
<feature type="domain" description="Collagen-like">
    <location>
        <begin position="22"/>
        <end position="58"/>
    </location>
</feature>
<feature type="domain" description="C1q" evidence="3">
    <location>
        <begin position="64"/>
        <end position="191"/>
    </location>
</feature>
<feature type="region of interest" description="Disordered" evidence="4">
    <location>
        <begin position="22"/>
        <end position="61"/>
    </location>
</feature>
<feature type="compositionally biased region" description="Pro residues" evidence="4">
    <location>
        <begin position="26"/>
        <end position="39"/>
    </location>
</feature>
<organism>
    <name type="scientific">Bos taurus</name>
    <name type="common">Bovine</name>
    <dbReference type="NCBI Taxonomy" id="9913"/>
    <lineage>
        <taxon>Eukaryota</taxon>
        <taxon>Metazoa</taxon>
        <taxon>Chordata</taxon>
        <taxon>Craniata</taxon>
        <taxon>Vertebrata</taxon>
        <taxon>Euteleostomi</taxon>
        <taxon>Mammalia</taxon>
        <taxon>Eutheria</taxon>
        <taxon>Laurasiatheria</taxon>
        <taxon>Artiodactyla</taxon>
        <taxon>Ruminantia</taxon>
        <taxon>Pecora</taxon>
        <taxon>Bovidae</taxon>
        <taxon>Bovinae</taxon>
        <taxon>Bos</taxon>
    </lineage>
</organism>
<proteinExistence type="evidence at transcript level"/>
<protein>
    <recommendedName>
        <fullName>Protein HP-20 homolog</fullName>
    </recommendedName>
</protein>
<name>HP20_BOVIN</name>
<comment type="subcellular location">
    <subcellularLocation>
        <location evidence="1">Secreted</location>
    </subcellularLocation>
</comment>